<keyword id="KW-0560">Oxidoreductase</keyword>
<keyword id="KW-0663">Pyridoxal phosphate</keyword>
<keyword id="KW-1185">Reference proteome</keyword>
<organism>
    <name type="scientific">Shewanella pealeana (strain ATCC 700345 / ANG-SQ1)</name>
    <dbReference type="NCBI Taxonomy" id="398579"/>
    <lineage>
        <taxon>Bacteria</taxon>
        <taxon>Pseudomonadati</taxon>
        <taxon>Pseudomonadota</taxon>
        <taxon>Gammaproteobacteria</taxon>
        <taxon>Alteromonadales</taxon>
        <taxon>Shewanellaceae</taxon>
        <taxon>Shewanella</taxon>
    </lineage>
</organism>
<protein>
    <recommendedName>
        <fullName evidence="1">Glycine dehydrogenase (decarboxylating)</fullName>
        <ecNumber evidence="1">1.4.4.2</ecNumber>
    </recommendedName>
    <alternativeName>
        <fullName evidence="1">Glycine cleavage system P-protein</fullName>
    </alternativeName>
    <alternativeName>
        <fullName evidence="1">Glycine decarboxylase</fullName>
    </alternativeName>
    <alternativeName>
        <fullName evidence="1">Glycine dehydrogenase (aminomethyl-transferring)</fullName>
    </alternativeName>
</protein>
<proteinExistence type="inferred from homology"/>
<feature type="chain" id="PRO_1000083215" description="Glycine dehydrogenase (decarboxylating)">
    <location>
        <begin position="1"/>
        <end position="962"/>
    </location>
</feature>
<feature type="modified residue" description="N6-(pyridoxal phosphate)lysine" evidence="1">
    <location>
        <position position="709"/>
    </location>
</feature>
<name>GCSP_SHEPA</name>
<reference key="1">
    <citation type="submission" date="2007-10" db="EMBL/GenBank/DDBJ databases">
        <title>Complete sequence of Shewanella pealeana ATCC 700345.</title>
        <authorList>
            <consortium name="US DOE Joint Genome Institute"/>
            <person name="Copeland A."/>
            <person name="Lucas S."/>
            <person name="Lapidus A."/>
            <person name="Barry K."/>
            <person name="Glavina del Rio T."/>
            <person name="Dalin E."/>
            <person name="Tice H."/>
            <person name="Pitluck S."/>
            <person name="Chertkov O."/>
            <person name="Brettin T."/>
            <person name="Bruce D."/>
            <person name="Detter J.C."/>
            <person name="Han C."/>
            <person name="Schmutz J."/>
            <person name="Larimer F."/>
            <person name="Land M."/>
            <person name="Hauser L."/>
            <person name="Kyrpides N."/>
            <person name="Kim E."/>
            <person name="Zhao J.-S.Z."/>
            <person name="Manno D."/>
            <person name="Hawari J."/>
            <person name="Richardson P."/>
        </authorList>
    </citation>
    <scope>NUCLEOTIDE SEQUENCE [LARGE SCALE GENOMIC DNA]</scope>
    <source>
        <strain>ATCC 700345 / ANG-SQ1</strain>
    </source>
</reference>
<gene>
    <name evidence="1" type="primary">gcvP</name>
    <name type="ordered locus">Spea_3301</name>
</gene>
<dbReference type="EC" id="1.4.4.2" evidence="1"/>
<dbReference type="EMBL" id="CP000851">
    <property type="protein sequence ID" value="ABV88616.1"/>
    <property type="molecule type" value="Genomic_DNA"/>
</dbReference>
<dbReference type="RefSeq" id="WP_012156515.1">
    <property type="nucleotide sequence ID" value="NC_009901.1"/>
</dbReference>
<dbReference type="SMR" id="A8H7S9"/>
<dbReference type="STRING" id="398579.Spea_3301"/>
<dbReference type="KEGG" id="spl:Spea_3301"/>
<dbReference type="eggNOG" id="COG0403">
    <property type="taxonomic scope" value="Bacteria"/>
</dbReference>
<dbReference type="eggNOG" id="COG1003">
    <property type="taxonomic scope" value="Bacteria"/>
</dbReference>
<dbReference type="HOGENOM" id="CLU_004620_1_1_6"/>
<dbReference type="OrthoDB" id="9801272at2"/>
<dbReference type="Proteomes" id="UP000002608">
    <property type="component" value="Chromosome"/>
</dbReference>
<dbReference type="GO" id="GO:0005829">
    <property type="term" value="C:cytosol"/>
    <property type="evidence" value="ECO:0007669"/>
    <property type="project" value="TreeGrafter"/>
</dbReference>
<dbReference type="GO" id="GO:0005960">
    <property type="term" value="C:glycine cleavage complex"/>
    <property type="evidence" value="ECO:0007669"/>
    <property type="project" value="TreeGrafter"/>
</dbReference>
<dbReference type="GO" id="GO:0016594">
    <property type="term" value="F:glycine binding"/>
    <property type="evidence" value="ECO:0007669"/>
    <property type="project" value="TreeGrafter"/>
</dbReference>
<dbReference type="GO" id="GO:0004375">
    <property type="term" value="F:glycine dehydrogenase (decarboxylating) activity"/>
    <property type="evidence" value="ECO:0007669"/>
    <property type="project" value="UniProtKB-EC"/>
</dbReference>
<dbReference type="GO" id="GO:0030170">
    <property type="term" value="F:pyridoxal phosphate binding"/>
    <property type="evidence" value="ECO:0007669"/>
    <property type="project" value="TreeGrafter"/>
</dbReference>
<dbReference type="GO" id="GO:0019464">
    <property type="term" value="P:glycine decarboxylation via glycine cleavage system"/>
    <property type="evidence" value="ECO:0007669"/>
    <property type="project" value="UniProtKB-UniRule"/>
</dbReference>
<dbReference type="CDD" id="cd00613">
    <property type="entry name" value="GDC-P"/>
    <property type="match status" value="2"/>
</dbReference>
<dbReference type="FunFam" id="3.40.640.10:FF:000005">
    <property type="entry name" value="Glycine dehydrogenase (decarboxylating), mitochondrial"/>
    <property type="match status" value="1"/>
</dbReference>
<dbReference type="FunFam" id="3.90.1150.10:FF:000007">
    <property type="entry name" value="Glycine dehydrogenase (decarboxylating), mitochondrial"/>
    <property type="match status" value="1"/>
</dbReference>
<dbReference type="FunFam" id="3.40.640.10:FF:000007">
    <property type="entry name" value="glycine dehydrogenase (Decarboxylating), mitochondrial"/>
    <property type="match status" value="1"/>
</dbReference>
<dbReference type="Gene3D" id="3.90.1150.10">
    <property type="entry name" value="Aspartate Aminotransferase, domain 1"/>
    <property type="match status" value="2"/>
</dbReference>
<dbReference type="Gene3D" id="3.40.640.10">
    <property type="entry name" value="Type I PLP-dependent aspartate aminotransferase-like (Major domain)"/>
    <property type="match status" value="2"/>
</dbReference>
<dbReference type="HAMAP" id="MF_00711">
    <property type="entry name" value="GcvP"/>
    <property type="match status" value="1"/>
</dbReference>
<dbReference type="InterPro" id="IPR003437">
    <property type="entry name" value="GcvP"/>
</dbReference>
<dbReference type="InterPro" id="IPR049316">
    <property type="entry name" value="GDC-P_C"/>
</dbReference>
<dbReference type="InterPro" id="IPR049315">
    <property type="entry name" value="GDC-P_N"/>
</dbReference>
<dbReference type="InterPro" id="IPR020581">
    <property type="entry name" value="GDC_P"/>
</dbReference>
<dbReference type="InterPro" id="IPR015424">
    <property type="entry name" value="PyrdxlP-dep_Trfase"/>
</dbReference>
<dbReference type="InterPro" id="IPR015421">
    <property type="entry name" value="PyrdxlP-dep_Trfase_major"/>
</dbReference>
<dbReference type="InterPro" id="IPR015422">
    <property type="entry name" value="PyrdxlP-dep_Trfase_small"/>
</dbReference>
<dbReference type="NCBIfam" id="TIGR00461">
    <property type="entry name" value="gcvP"/>
    <property type="match status" value="1"/>
</dbReference>
<dbReference type="NCBIfam" id="NF003346">
    <property type="entry name" value="PRK04366.1"/>
    <property type="match status" value="1"/>
</dbReference>
<dbReference type="PANTHER" id="PTHR11773:SF13">
    <property type="entry name" value="GLYCINE DEHYDROGENASE (DECARBOXYLATING)"/>
    <property type="match status" value="1"/>
</dbReference>
<dbReference type="PANTHER" id="PTHR11773">
    <property type="entry name" value="GLYCINE DEHYDROGENASE, DECARBOXYLATING"/>
    <property type="match status" value="1"/>
</dbReference>
<dbReference type="Pfam" id="PF21478">
    <property type="entry name" value="GcvP2_C"/>
    <property type="match status" value="1"/>
</dbReference>
<dbReference type="Pfam" id="PF02347">
    <property type="entry name" value="GDC-P"/>
    <property type="match status" value="2"/>
</dbReference>
<dbReference type="SUPFAM" id="SSF53383">
    <property type="entry name" value="PLP-dependent transferases"/>
    <property type="match status" value="2"/>
</dbReference>
<sequence length="962" mass="104430">MTTETLTQLEQHELFLRRHIGPGADQQQEMLNFVGAESLEDLTAQIVPGAILLNRDLAVGDSCGEAEGLAYIRKIADKNKVFKSYIGMGYHGTEVPSVIQRNVLENPGWYTAYTPYQPEIAQGRLEAILNFQQVSMDLTGLDLASSSLLDEATAAAEAMALSKRVSKAKKANIFFVADDVFPQTIDVIKTRAECFGFEVVVGPAEEAVNYELFGALFQYTNRVGQICDHTELFAKLHEKKALVSVAADIMSLVVLKSPGSMGADVVLGNSQRFGVPMGFGGPHAAFFVTRDEYKRSLPGRIIGVSQDTRGNRALRMAMQTREQHIRREKANSNICTAQVLLANMASFYAVFHGPQGLKVIAERIHRLTDIVAAALTAKGVELVNNTWFDTLSIKGLDVTAVQARALATGLNLRIDSDGVIGVSLSETTTRSDVAELFDVLLGEGHGQDAAALDAAIIANGSSSIPSELVRKDAILTHPTFNRYQSETEMMRYIKRLENKDLALNHSMISLGSCTMKLNAATEMAPITWPEFGNMHPFCPQDQAQGYAQLLEELSTWLVDITGYDAVSLQPNSGAQGEYAGLLAIKQYHESRGDAHRNICLIPQSAHGTNPASAQLAGMKIVVTACDKAGNIDMADLKAKAAEVADNLSCIMVTYPSTHGVYEETIGEICEVIHQHGGQVYLDGANMNAQVGLTSPGFIGADVSHLNLHKTFAIPHGGGGPGMGPIGVKKHLAPFLSGHSVVKHGLESDNNGAVSAAPFGSAGILPITWMYIKLLGKKGLRQSTQVALLNANYVMKKLSAHYPVLYTGRNDRVAHECIIDLRPLKEASGVTEMDIAKRLNDYGFHAPTMSFPVAGTLMIEPTESESKVELDRFIEAMVSIRGEIAKVEAGEWPVDNNPLHNAPHTLADIMDPAFDSRPYSREEAVFPTNAVKANKFWPTVNRIDDVYGDRNLMCSCAPVSDYE</sequence>
<comment type="function">
    <text evidence="1">The glycine cleavage system catalyzes the degradation of glycine. The P protein binds the alpha-amino group of glycine through its pyridoxal phosphate cofactor; CO(2) is released and the remaining methylamine moiety is then transferred to the lipoamide cofactor of the H protein.</text>
</comment>
<comment type="catalytic activity">
    <reaction evidence="1">
        <text>N(6)-[(R)-lipoyl]-L-lysyl-[glycine-cleavage complex H protein] + glycine + H(+) = N(6)-[(R)-S(8)-aminomethyldihydrolipoyl]-L-lysyl-[glycine-cleavage complex H protein] + CO2</text>
        <dbReference type="Rhea" id="RHEA:24304"/>
        <dbReference type="Rhea" id="RHEA-COMP:10494"/>
        <dbReference type="Rhea" id="RHEA-COMP:10495"/>
        <dbReference type="ChEBI" id="CHEBI:15378"/>
        <dbReference type="ChEBI" id="CHEBI:16526"/>
        <dbReference type="ChEBI" id="CHEBI:57305"/>
        <dbReference type="ChEBI" id="CHEBI:83099"/>
        <dbReference type="ChEBI" id="CHEBI:83143"/>
        <dbReference type="EC" id="1.4.4.2"/>
    </reaction>
</comment>
<comment type="cofactor">
    <cofactor evidence="1">
        <name>pyridoxal 5'-phosphate</name>
        <dbReference type="ChEBI" id="CHEBI:597326"/>
    </cofactor>
</comment>
<comment type="subunit">
    <text evidence="1">The glycine cleavage system is composed of four proteins: P, T, L and H.</text>
</comment>
<comment type="similarity">
    <text evidence="1">Belongs to the GcvP family.</text>
</comment>
<accession>A8H7S9</accession>
<evidence type="ECO:0000255" key="1">
    <source>
        <dbReference type="HAMAP-Rule" id="MF_00711"/>
    </source>
</evidence>